<dbReference type="EC" id="6.5.1.2" evidence="1"/>
<dbReference type="EMBL" id="CP001393">
    <property type="protein sequence ID" value="ACM60712.1"/>
    <property type="molecule type" value="Genomic_DNA"/>
</dbReference>
<dbReference type="RefSeq" id="WP_015908051.1">
    <property type="nucleotide sequence ID" value="NC_012034.1"/>
</dbReference>
<dbReference type="SMR" id="B9MK54"/>
<dbReference type="STRING" id="521460.Athe_1618"/>
<dbReference type="GeneID" id="31772969"/>
<dbReference type="KEGG" id="ate:Athe_1618"/>
<dbReference type="eggNOG" id="COG0272">
    <property type="taxonomic scope" value="Bacteria"/>
</dbReference>
<dbReference type="HOGENOM" id="CLU_007764_2_1_9"/>
<dbReference type="Proteomes" id="UP000007723">
    <property type="component" value="Chromosome"/>
</dbReference>
<dbReference type="GO" id="GO:0005829">
    <property type="term" value="C:cytosol"/>
    <property type="evidence" value="ECO:0007669"/>
    <property type="project" value="TreeGrafter"/>
</dbReference>
<dbReference type="GO" id="GO:0003677">
    <property type="term" value="F:DNA binding"/>
    <property type="evidence" value="ECO:0007669"/>
    <property type="project" value="InterPro"/>
</dbReference>
<dbReference type="GO" id="GO:0003911">
    <property type="term" value="F:DNA ligase (NAD+) activity"/>
    <property type="evidence" value="ECO:0007669"/>
    <property type="project" value="UniProtKB-UniRule"/>
</dbReference>
<dbReference type="GO" id="GO:0046872">
    <property type="term" value="F:metal ion binding"/>
    <property type="evidence" value="ECO:0007669"/>
    <property type="project" value="UniProtKB-KW"/>
</dbReference>
<dbReference type="GO" id="GO:0006281">
    <property type="term" value="P:DNA repair"/>
    <property type="evidence" value="ECO:0007669"/>
    <property type="project" value="UniProtKB-KW"/>
</dbReference>
<dbReference type="GO" id="GO:0006260">
    <property type="term" value="P:DNA replication"/>
    <property type="evidence" value="ECO:0007669"/>
    <property type="project" value="UniProtKB-KW"/>
</dbReference>
<dbReference type="CDD" id="cd17748">
    <property type="entry name" value="BRCT_DNA_ligase_like"/>
    <property type="match status" value="1"/>
</dbReference>
<dbReference type="CDD" id="cd00114">
    <property type="entry name" value="LIGANc"/>
    <property type="match status" value="1"/>
</dbReference>
<dbReference type="FunFam" id="1.10.150.20:FF:000006">
    <property type="entry name" value="DNA ligase"/>
    <property type="match status" value="1"/>
</dbReference>
<dbReference type="FunFam" id="1.10.150.20:FF:000007">
    <property type="entry name" value="DNA ligase"/>
    <property type="match status" value="1"/>
</dbReference>
<dbReference type="FunFam" id="1.10.287.610:FF:000002">
    <property type="entry name" value="DNA ligase"/>
    <property type="match status" value="1"/>
</dbReference>
<dbReference type="FunFam" id="2.40.50.140:FF:000012">
    <property type="entry name" value="DNA ligase"/>
    <property type="match status" value="1"/>
</dbReference>
<dbReference type="FunFam" id="3.30.470.30:FF:000001">
    <property type="entry name" value="DNA ligase"/>
    <property type="match status" value="1"/>
</dbReference>
<dbReference type="Gene3D" id="6.20.10.30">
    <property type="match status" value="1"/>
</dbReference>
<dbReference type="Gene3D" id="1.10.150.20">
    <property type="entry name" value="5' to 3' exonuclease, C-terminal subdomain"/>
    <property type="match status" value="2"/>
</dbReference>
<dbReference type="Gene3D" id="3.40.50.10190">
    <property type="entry name" value="BRCT domain"/>
    <property type="match status" value="1"/>
</dbReference>
<dbReference type="Gene3D" id="3.30.470.30">
    <property type="entry name" value="DNA ligase/mRNA capping enzyme"/>
    <property type="match status" value="1"/>
</dbReference>
<dbReference type="Gene3D" id="1.10.287.610">
    <property type="entry name" value="Helix hairpin bin"/>
    <property type="match status" value="1"/>
</dbReference>
<dbReference type="Gene3D" id="2.40.50.140">
    <property type="entry name" value="Nucleic acid-binding proteins"/>
    <property type="match status" value="1"/>
</dbReference>
<dbReference type="HAMAP" id="MF_01588">
    <property type="entry name" value="DNA_ligase_A"/>
    <property type="match status" value="1"/>
</dbReference>
<dbReference type="InterPro" id="IPR001357">
    <property type="entry name" value="BRCT_dom"/>
</dbReference>
<dbReference type="InterPro" id="IPR036420">
    <property type="entry name" value="BRCT_dom_sf"/>
</dbReference>
<dbReference type="InterPro" id="IPR041663">
    <property type="entry name" value="DisA/LigA_HHH"/>
</dbReference>
<dbReference type="InterPro" id="IPR001679">
    <property type="entry name" value="DNA_ligase"/>
</dbReference>
<dbReference type="InterPro" id="IPR018239">
    <property type="entry name" value="DNA_ligase_AS"/>
</dbReference>
<dbReference type="InterPro" id="IPR033136">
    <property type="entry name" value="DNA_ligase_CS"/>
</dbReference>
<dbReference type="InterPro" id="IPR013839">
    <property type="entry name" value="DNAligase_adenylation"/>
</dbReference>
<dbReference type="InterPro" id="IPR013840">
    <property type="entry name" value="DNAligase_N"/>
</dbReference>
<dbReference type="InterPro" id="IPR003583">
    <property type="entry name" value="Hlx-hairpin-Hlx_DNA-bd_motif"/>
</dbReference>
<dbReference type="InterPro" id="IPR012340">
    <property type="entry name" value="NA-bd_OB-fold"/>
</dbReference>
<dbReference type="InterPro" id="IPR004150">
    <property type="entry name" value="NAD_DNA_ligase_OB"/>
</dbReference>
<dbReference type="InterPro" id="IPR010994">
    <property type="entry name" value="RuvA_2-like"/>
</dbReference>
<dbReference type="InterPro" id="IPR004149">
    <property type="entry name" value="Znf_DNAligase_C4"/>
</dbReference>
<dbReference type="NCBIfam" id="TIGR00575">
    <property type="entry name" value="dnlj"/>
    <property type="match status" value="1"/>
</dbReference>
<dbReference type="NCBIfam" id="NF005932">
    <property type="entry name" value="PRK07956.1"/>
    <property type="match status" value="1"/>
</dbReference>
<dbReference type="PANTHER" id="PTHR23389">
    <property type="entry name" value="CHROMOSOME TRANSMISSION FIDELITY FACTOR 18"/>
    <property type="match status" value="1"/>
</dbReference>
<dbReference type="PANTHER" id="PTHR23389:SF9">
    <property type="entry name" value="DNA LIGASE"/>
    <property type="match status" value="1"/>
</dbReference>
<dbReference type="Pfam" id="PF00533">
    <property type="entry name" value="BRCT"/>
    <property type="match status" value="1"/>
</dbReference>
<dbReference type="Pfam" id="PF01653">
    <property type="entry name" value="DNA_ligase_aden"/>
    <property type="match status" value="1"/>
</dbReference>
<dbReference type="Pfam" id="PF03120">
    <property type="entry name" value="DNA_ligase_OB"/>
    <property type="match status" value="1"/>
</dbReference>
<dbReference type="Pfam" id="PF03119">
    <property type="entry name" value="DNA_ligase_ZBD"/>
    <property type="match status" value="1"/>
</dbReference>
<dbReference type="Pfam" id="PF12826">
    <property type="entry name" value="HHH_2"/>
    <property type="match status" value="1"/>
</dbReference>
<dbReference type="Pfam" id="PF22745">
    <property type="entry name" value="Nlig-Ia"/>
    <property type="match status" value="1"/>
</dbReference>
<dbReference type="PIRSF" id="PIRSF001604">
    <property type="entry name" value="LigA"/>
    <property type="match status" value="1"/>
</dbReference>
<dbReference type="SMART" id="SM00292">
    <property type="entry name" value="BRCT"/>
    <property type="match status" value="1"/>
</dbReference>
<dbReference type="SMART" id="SM00278">
    <property type="entry name" value="HhH1"/>
    <property type="match status" value="4"/>
</dbReference>
<dbReference type="SMART" id="SM00532">
    <property type="entry name" value="LIGANc"/>
    <property type="match status" value="1"/>
</dbReference>
<dbReference type="SUPFAM" id="SSF52113">
    <property type="entry name" value="BRCT domain"/>
    <property type="match status" value="1"/>
</dbReference>
<dbReference type="SUPFAM" id="SSF56091">
    <property type="entry name" value="DNA ligase/mRNA capping enzyme, catalytic domain"/>
    <property type="match status" value="1"/>
</dbReference>
<dbReference type="SUPFAM" id="SSF50249">
    <property type="entry name" value="Nucleic acid-binding proteins"/>
    <property type="match status" value="1"/>
</dbReference>
<dbReference type="SUPFAM" id="SSF47781">
    <property type="entry name" value="RuvA domain 2-like"/>
    <property type="match status" value="1"/>
</dbReference>
<dbReference type="PROSITE" id="PS50172">
    <property type="entry name" value="BRCT"/>
    <property type="match status" value="1"/>
</dbReference>
<dbReference type="PROSITE" id="PS01055">
    <property type="entry name" value="DNA_LIGASE_N1"/>
    <property type="match status" value="1"/>
</dbReference>
<dbReference type="PROSITE" id="PS01056">
    <property type="entry name" value="DNA_LIGASE_N2"/>
    <property type="match status" value="1"/>
</dbReference>
<name>DNLJ_CALBD</name>
<feature type="chain" id="PRO_0000380291" description="DNA ligase">
    <location>
        <begin position="1"/>
        <end position="673"/>
    </location>
</feature>
<feature type="domain" description="BRCT" evidence="1">
    <location>
        <begin position="583"/>
        <end position="672"/>
    </location>
</feature>
<feature type="active site" description="N6-AMP-lysine intermediate" evidence="1">
    <location>
        <position position="115"/>
    </location>
</feature>
<feature type="binding site" evidence="1">
    <location>
        <begin position="33"/>
        <end position="37"/>
    </location>
    <ligand>
        <name>NAD(+)</name>
        <dbReference type="ChEBI" id="CHEBI:57540"/>
    </ligand>
</feature>
<feature type="binding site" evidence="1">
    <location>
        <begin position="82"/>
        <end position="83"/>
    </location>
    <ligand>
        <name>NAD(+)</name>
        <dbReference type="ChEBI" id="CHEBI:57540"/>
    </ligand>
</feature>
<feature type="binding site" evidence="1">
    <location>
        <position position="113"/>
    </location>
    <ligand>
        <name>NAD(+)</name>
        <dbReference type="ChEBI" id="CHEBI:57540"/>
    </ligand>
</feature>
<feature type="binding site" evidence="1">
    <location>
        <position position="136"/>
    </location>
    <ligand>
        <name>NAD(+)</name>
        <dbReference type="ChEBI" id="CHEBI:57540"/>
    </ligand>
</feature>
<feature type="binding site" evidence="1">
    <location>
        <position position="170"/>
    </location>
    <ligand>
        <name>NAD(+)</name>
        <dbReference type="ChEBI" id="CHEBI:57540"/>
    </ligand>
</feature>
<feature type="binding site" evidence="1">
    <location>
        <position position="285"/>
    </location>
    <ligand>
        <name>NAD(+)</name>
        <dbReference type="ChEBI" id="CHEBI:57540"/>
    </ligand>
</feature>
<feature type="binding site" evidence="1">
    <location>
        <position position="309"/>
    </location>
    <ligand>
        <name>NAD(+)</name>
        <dbReference type="ChEBI" id="CHEBI:57540"/>
    </ligand>
</feature>
<feature type="binding site" evidence="1">
    <location>
        <position position="403"/>
    </location>
    <ligand>
        <name>Zn(2+)</name>
        <dbReference type="ChEBI" id="CHEBI:29105"/>
    </ligand>
</feature>
<feature type="binding site" evidence="1">
    <location>
        <position position="406"/>
    </location>
    <ligand>
        <name>Zn(2+)</name>
        <dbReference type="ChEBI" id="CHEBI:29105"/>
    </ligand>
</feature>
<feature type="binding site" evidence="1">
    <location>
        <position position="421"/>
    </location>
    <ligand>
        <name>Zn(2+)</name>
        <dbReference type="ChEBI" id="CHEBI:29105"/>
    </ligand>
</feature>
<feature type="binding site" evidence="1">
    <location>
        <position position="426"/>
    </location>
    <ligand>
        <name>Zn(2+)</name>
        <dbReference type="ChEBI" id="CHEBI:29105"/>
    </ligand>
</feature>
<reference key="1">
    <citation type="submission" date="2009-01" db="EMBL/GenBank/DDBJ databases">
        <title>Complete sequence of chromosome of Caldicellulosiruptor becscii DSM 6725.</title>
        <authorList>
            <person name="Lucas S."/>
            <person name="Copeland A."/>
            <person name="Lapidus A."/>
            <person name="Glavina del Rio T."/>
            <person name="Tice H."/>
            <person name="Bruce D."/>
            <person name="Goodwin L."/>
            <person name="Pitluck S."/>
            <person name="Sims D."/>
            <person name="Meincke L."/>
            <person name="Brettin T."/>
            <person name="Detter J.C."/>
            <person name="Han C."/>
            <person name="Larimer F."/>
            <person name="Land M."/>
            <person name="Hauser L."/>
            <person name="Kyrpides N."/>
            <person name="Ovchinnikova G."/>
            <person name="Kataeva I."/>
            <person name="Adams M.W.W."/>
        </authorList>
    </citation>
    <scope>NUCLEOTIDE SEQUENCE [LARGE SCALE GENOMIC DNA]</scope>
    <source>
        <strain>ATCC BAA-1888 / DSM 6725 / KCTC 15123 / Z-1320</strain>
    </source>
</reference>
<proteinExistence type="inferred from homology"/>
<organism>
    <name type="scientific">Caldicellulosiruptor bescii (strain ATCC BAA-1888 / DSM 6725 / KCTC 15123 / Z-1320)</name>
    <name type="common">Anaerocellum thermophilum</name>
    <dbReference type="NCBI Taxonomy" id="521460"/>
    <lineage>
        <taxon>Bacteria</taxon>
        <taxon>Bacillati</taxon>
        <taxon>Bacillota</taxon>
        <taxon>Bacillota incertae sedis</taxon>
        <taxon>Caldicellulosiruptorales</taxon>
        <taxon>Caldicellulosiruptoraceae</taxon>
        <taxon>Caldicellulosiruptor</taxon>
    </lineage>
</organism>
<sequence>MSEFIRKRIRELVDLINYHDYKYYVEDNPEISDYEYDMLYRELVELEKQYPEYVFPDSPTQRVGGKVKEGFKEVVHRVPLLSLSNVFNEGELYDFDRRLKELIGTSNFDYVVEYKIDGLSVALEYENGLFIRGATRGDGNVGEDVTENLKTIRSIPLRLKEDISIVVRGEVFMPKDEFIKLNQEREENEEPLFANPRNAAAGSLRQLDPKITAQRKLDIFVFNIQWCEKELETHAQALEFLKHLGFKVSPDYVVCRDIKEAFEAIKKIEEKRDLLPFEIDGAVVKLNQLRLRDVAGETAKSPRWAVAYKFPPEKKETKLLDIEVNVGRTGILTPTAILEPVRISGSVVSRATLHNMDYIRQKDIRIGDTVIVQKAAEIIPEVVEVVFSKRTGQERIFEMPKKCPVCGADVIKFEDEVAYRCTGVECPAKSYRLILHFVSRDAMDIAGMGEMVVKTLFEKGLIKTPADIYYLKFEDLVNLERFGVKSTNNLLKAIQASKNRPLDRLIYALGIRHIGQKAAKTLAEHISSIDDLFTITEEQLLCLPDFGEKMAKSVVTFFRQEQTRHLIERLKAAGVNTVSEKKAKSDILKGYTFVLTGALSKYSRNEAKEILESLGAKVTESVSKKTTAVIVGQDPGSKFTKAQQLGVKILNEEDFEKLVKALSREEAEKILME</sequence>
<keyword id="KW-0227">DNA damage</keyword>
<keyword id="KW-0234">DNA repair</keyword>
<keyword id="KW-0235">DNA replication</keyword>
<keyword id="KW-0436">Ligase</keyword>
<keyword id="KW-0460">Magnesium</keyword>
<keyword id="KW-0464">Manganese</keyword>
<keyword id="KW-0479">Metal-binding</keyword>
<keyword id="KW-0520">NAD</keyword>
<keyword id="KW-0862">Zinc</keyword>
<accession>B9MK54</accession>
<comment type="function">
    <text evidence="1">DNA ligase that catalyzes the formation of phosphodiester linkages between 5'-phosphoryl and 3'-hydroxyl groups in double-stranded DNA using NAD as a coenzyme and as the energy source for the reaction. It is essential for DNA replication and repair of damaged DNA.</text>
</comment>
<comment type="catalytic activity">
    <reaction evidence="1">
        <text>NAD(+) + (deoxyribonucleotide)n-3'-hydroxyl + 5'-phospho-(deoxyribonucleotide)m = (deoxyribonucleotide)n+m + AMP + beta-nicotinamide D-nucleotide.</text>
        <dbReference type="EC" id="6.5.1.2"/>
    </reaction>
</comment>
<comment type="cofactor">
    <cofactor evidence="1">
        <name>Mg(2+)</name>
        <dbReference type="ChEBI" id="CHEBI:18420"/>
    </cofactor>
    <cofactor evidence="1">
        <name>Mn(2+)</name>
        <dbReference type="ChEBI" id="CHEBI:29035"/>
    </cofactor>
</comment>
<comment type="similarity">
    <text evidence="1">Belongs to the NAD-dependent DNA ligase family. LigA subfamily.</text>
</comment>
<protein>
    <recommendedName>
        <fullName evidence="1">DNA ligase</fullName>
        <ecNumber evidence="1">6.5.1.2</ecNumber>
    </recommendedName>
    <alternativeName>
        <fullName evidence="1">Polydeoxyribonucleotide synthase [NAD(+)]</fullName>
    </alternativeName>
</protein>
<gene>
    <name evidence="1" type="primary">ligA</name>
    <name type="ordered locus">Athe_1618</name>
</gene>
<evidence type="ECO:0000255" key="1">
    <source>
        <dbReference type="HAMAP-Rule" id="MF_01588"/>
    </source>
</evidence>